<gene>
    <name evidence="1" type="primary">ilvD</name>
    <name type="ordered locus">VV3243</name>
</gene>
<protein>
    <recommendedName>
        <fullName evidence="1">Dihydroxy-acid dehydratase</fullName>
        <shortName evidence="1">DAD</shortName>
        <ecNumber evidence="1">4.2.1.9</ecNumber>
    </recommendedName>
</protein>
<evidence type="ECO:0000255" key="1">
    <source>
        <dbReference type="HAMAP-Rule" id="MF_00012"/>
    </source>
</evidence>
<organism>
    <name type="scientific">Vibrio vulnificus (strain YJ016)</name>
    <dbReference type="NCBI Taxonomy" id="196600"/>
    <lineage>
        <taxon>Bacteria</taxon>
        <taxon>Pseudomonadati</taxon>
        <taxon>Pseudomonadota</taxon>
        <taxon>Gammaproteobacteria</taxon>
        <taxon>Vibrionales</taxon>
        <taxon>Vibrionaceae</taxon>
        <taxon>Vibrio</taxon>
    </lineage>
</organism>
<reference key="1">
    <citation type="journal article" date="2003" name="Genome Res.">
        <title>Comparative genome analysis of Vibrio vulnificus, a marine pathogen.</title>
        <authorList>
            <person name="Chen C.-Y."/>
            <person name="Wu K.-M."/>
            <person name="Chang Y.-C."/>
            <person name="Chang C.-H."/>
            <person name="Tsai H.-C."/>
            <person name="Liao T.-L."/>
            <person name="Liu Y.-M."/>
            <person name="Chen H.-J."/>
            <person name="Shen A.B.-T."/>
            <person name="Li J.-C."/>
            <person name="Su T.-L."/>
            <person name="Shao C.-P."/>
            <person name="Lee C.-T."/>
            <person name="Hor L.-I."/>
            <person name="Tsai S.-F."/>
        </authorList>
    </citation>
    <scope>NUCLEOTIDE SEQUENCE [LARGE SCALE GENOMIC DNA]</scope>
    <source>
        <strain>YJ016</strain>
    </source>
</reference>
<feature type="chain" id="PRO_0000103529" description="Dihydroxy-acid dehydratase">
    <location>
        <begin position="1"/>
        <end position="613"/>
    </location>
</feature>
<feature type="active site" description="Proton acceptor" evidence="1">
    <location>
        <position position="517"/>
    </location>
</feature>
<feature type="binding site" evidence="1">
    <location>
        <position position="81"/>
    </location>
    <ligand>
        <name>Mg(2+)</name>
        <dbReference type="ChEBI" id="CHEBI:18420"/>
    </ligand>
</feature>
<feature type="binding site" evidence="1">
    <location>
        <position position="122"/>
    </location>
    <ligand>
        <name>[2Fe-2S] cluster</name>
        <dbReference type="ChEBI" id="CHEBI:190135"/>
    </ligand>
</feature>
<feature type="binding site" evidence="1">
    <location>
        <position position="123"/>
    </location>
    <ligand>
        <name>Mg(2+)</name>
        <dbReference type="ChEBI" id="CHEBI:18420"/>
    </ligand>
</feature>
<feature type="binding site" description="via carbamate group" evidence="1">
    <location>
        <position position="124"/>
    </location>
    <ligand>
        <name>Mg(2+)</name>
        <dbReference type="ChEBI" id="CHEBI:18420"/>
    </ligand>
</feature>
<feature type="binding site" evidence="1">
    <location>
        <position position="195"/>
    </location>
    <ligand>
        <name>[2Fe-2S] cluster</name>
        <dbReference type="ChEBI" id="CHEBI:190135"/>
    </ligand>
</feature>
<feature type="binding site" evidence="1">
    <location>
        <position position="491"/>
    </location>
    <ligand>
        <name>Mg(2+)</name>
        <dbReference type="ChEBI" id="CHEBI:18420"/>
    </ligand>
</feature>
<feature type="modified residue" description="N6-carboxylysine" evidence="1">
    <location>
        <position position="124"/>
    </location>
</feature>
<keyword id="KW-0001">2Fe-2S</keyword>
<keyword id="KW-0028">Amino-acid biosynthesis</keyword>
<keyword id="KW-0100">Branched-chain amino acid biosynthesis</keyword>
<keyword id="KW-0408">Iron</keyword>
<keyword id="KW-0411">Iron-sulfur</keyword>
<keyword id="KW-0456">Lyase</keyword>
<keyword id="KW-0460">Magnesium</keyword>
<keyword id="KW-0479">Metal-binding</keyword>
<name>ILVD_VIBVY</name>
<dbReference type="EC" id="4.2.1.9" evidence="1"/>
<dbReference type="EMBL" id="BA000037">
    <property type="protein sequence ID" value="BAC96007.1"/>
    <property type="molecule type" value="Genomic_DNA"/>
</dbReference>
<dbReference type="RefSeq" id="WP_011151437.1">
    <property type="nucleotide sequence ID" value="NC_005139.1"/>
</dbReference>
<dbReference type="SMR" id="Q7MGI8"/>
<dbReference type="STRING" id="672.VV93_v1c29650"/>
<dbReference type="GeneID" id="93895318"/>
<dbReference type="KEGG" id="vvy:VV3243"/>
<dbReference type="eggNOG" id="COG0129">
    <property type="taxonomic scope" value="Bacteria"/>
</dbReference>
<dbReference type="HOGENOM" id="CLU_014271_4_2_6"/>
<dbReference type="UniPathway" id="UPA00047">
    <property type="reaction ID" value="UER00057"/>
</dbReference>
<dbReference type="UniPathway" id="UPA00049">
    <property type="reaction ID" value="UER00061"/>
</dbReference>
<dbReference type="Proteomes" id="UP000002675">
    <property type="component" value="Chromosome I"/>
</dbReference>
<dbReference type="GO" id="GO:0005829">
    <property type="term" value="C:cytosol"/>
    <property type="evidence" value="ECO:0007669"/>
    <property type="project" value="TreeGrafter"/>
</dbReference>
<dbReference type="GO" id="GO:0051537">
    <property type="term" value="F:2 iron, 2 sulfur cluster binding"/>
    <property type="evidence" value="ECO:0007669"/>
    <property type="project" value="UniProtKB-UniRule"/>
</dbReference>
<dbReference type="GO" id="GO:0004160">
    <property type="term" value="F:dihydroxy-acid dehydratase activity"/>
    <property type="evidence" value="ECO:0007669"/>
    <property type="project" value="UniProtKB-UniRule"/>
</dbReference>
<dbReference type="GO" id="GO:0000287">
    <property type="term" value="F:magnesium ion binding"/>
    <property type="evidence" value="ECO:0007669"/>
    <property type="project" value="UniProtKB-UniRule"/>
</dbReference>
<dbReference type="GO" id="GO:0009097">
    <property type="term" value="P:isoleucine biosynthetic process"/>
    <property type="evidence" value="ECO:0007669"/>
    <property type="project" value="UniProtKB-UniRule"/>
</dbReference>
<dbReference type="GO" id="GO:0009099">
    <property type="term" value="P:L-valine biosynthetic process"/>
    <property type="evidence" value="ECO:0007669"/>
    <property type="project" value="UniProtKB-UniRule"/>
</dbReference>
<dbReference type="FunFam" id="3.50.30.80:FF:000001">
    <property type="entry name" value="Dihydroxy-acid dehydratase"/>
    <property type="match status" value="1"/>
</dbReference>
<dbReference type="Gene3D" id="3.50.30.80">
    <property type="entry name" value="IlvD/EDD C-terminal domain-like"/>
    <property type="match status" value="1"/>
</dbReference>
<dbReference type="HAMAP" id="MF_00012">
    <property type="entry name" value="IlvD"/>
    <property type="match status" value="1"/>
</dbReference>
<dbReference type="InterPro" id="IPR042096">
    <property type="entry name" value="Dihydro-acid_dehy_C"/>
</dbReference>
<dbReference type="InterPro" id="IPR004404">
    <property type="entry name" value="DihydroxyA_deHydtase"/>
</dbReference>
<dbReference type="InterPro" id="IPR020558">
    <property type="entry name" value="DiOHA_6PGluconate_deHydtase_CS"/>
</dbReference>
<dbReference type="InterPro" id="IPR056740">
    <property type="entry name" value="ILV_EDD_C"/>
</dbReference>
<dbReference type="InterPro" id="IPR000581">
    <property type="entry name" value="ILV_EDD_N"/>
</dbReference>
<dbReference type="InterPro" id="IPR037237">
    <property type="entry name" value="IlvD/EDD_N"/>
</dbReference>
<dbReference type="NCBIfam" id="TIGR00110">
    <property type="entry name" value="ilvD"/>
    <property type="match status" value="1"/>
</dbReference>
<dbReference type="NCBIfam" id="NF009103">
    <property type="entry name" value="PRK12448.1"/>
    <property type="match status" value="1"/>
</dbReference>
<dbReference type="PANTHER" id="PTHR43661">
    <property type="entry name" value="D-XYLONATE DEHYDRATASE"/>
    <property type="match status" value="1"/>
</dbReference>
<dbReference type="PANTHER" id="PTHR43661:SF3">
    <property type="entry name" value="D-XYLONATE DEHYDRATASE YAGF-RELATED"/>
    <property type="match status" value="1"/>
</dbReference>
<dbReference type="Pfam" id="PF24877">
    <property type="entry name" value="ILV_EDD_C"/>
    <property type="match status" value="1"/>
</dbReference>
<dbReference type="Pfam" id="PF00920">
    <property type="entry name" value="ILVD_EDD_N"/>
    <property type="match status" value="1"/>
</dbReference>
<dbReference type="SUPFAM" id="SSF143975">
    <property type="entry name" value="IlvD/EDD N-terminal domain-like"/>
    <property type="match status" value="1"/>
</dbReference>
<dbReference type="SUPFAM" id="SSF52016">
    <property type="entry name" value="LeuD/IlvD-like"/>
    <property type="match status" value="1"/>
</dbReference>
<dbReference type="PROSITE" id="PS00886">
    <property type="entry name" value="ILVD_EDD_1"/>
    <property type="match status" value="1"/>
</dbReference>
<dbReference type="PROSITE" id="PS00887">
    <property type="entry name" value="ILVD_EDD_2"/>
    <property type="match status" value="1"/>
</dbReference>
<sequence>MPKYRSATTTHGRNMAGARALWRATGVKDEDFGKPIIAVVNSFTQFVPGHVHLKDLGQLVAREIEAAGGIAKEFNTIAVDDGIAMGHGGMLYSLPSRELIADSVEYMVNAHCADAMVCISNCDKITPGMLMASMRLNIPVIFVSGGPMEAGKTKLSDQIIKLDLVDAMIQGADPKVSDEQSEQIERSACPTCGSCSGMFTANSMNCLTEALGLSQPGNGSLLATHADRKQLFISAGQRIVELTKRYYEQDDESALPRNIATKAAFENAMALDIAMGGSTNTVLHLLAAAQEGEVDFDMTDIDRMSRMVPHLCKVAPSTQKYHMEDVHRAGGVVGILGELNRAGLLHNQSKTVLGLTWEEQLAQYDIMLTDSEEVKRFYRAGPAGIRTTQAFSQDCRWDTLDDDRAQGCIRTKENAFSQDGGLAVLKGNIALDGCIVKTAGVDESILKFTGPAVVFESQEDAVEGILGGKVKAGDVVVIRYEGPKGGPGMQEMLYPTTYLKSMGLGKACALLTDGRFSGGTSGLSIGHASPEAANGGAIGLVKQGDLIAIDIPNRTISLQVSEQEMAERRAEQDALGWKPVSRQREVSFALKAYASMATSADKGAVRDKSKLEG</sequence>
<accession>Q7MGI8</accession>
<proteinExistence type="inferred from homology"/>
<comment type="function">
    <text evidence="1">Functions in the biosynthesis of branched-chain amino acids. Catalyzes the dehydration of (2R,3R)-2,3-dihydroxy-3-methylpentanoate (2,3-dihydroxy-3-methylvalerate) into 2-oxo-3-methylpentanoate (2-oxo-3-methylvalerate) and of (2R)-2,3-dihydroxy-3-methylbutanoate (2,3-dihydroxyisovalerate) into 2-oxo-3-methylbutanoate (2-oxoisovalerate), the penultimate precursor to L-isoleucine and L-valine, respectively.</text>
</comment>
<comment type="catalytic activity">
    <reaction evidence="1">
        <text>(2R)-2,3-dihydroxy-3-methylbutanoate = 3-methyl-2-oxobutanoate + H2O</text>
        <dbReference type="Rhea" id="RHEA:24809"/>
        <dbReference type="ChEBI" id="CHEBI:11851"/>
        <dbReference type="ChEBI" id="CHEBI:15377"/>
        <dbReference type="ChEBI" id="CHEBI:49072"/>
        <dbReference type="EC" id="4.2.1.9"/>
    </reaction>
    <physiologicalReaction direction="left-to-right" evidence="1">
        <dbReference type="Rhea" id="RHEA:24810"/>
    </physiologicalReaction>
</comment>
<comment type="catalytic activity">
    <reaction evidence="1">
        <text>(2R,3R)-2,3-dihydroxy-3-methylpentanoate = (S)-3-methyl-2-oxopentanoate + H2O</text>
        <dbReference type="Rhea" id="RHEA:27694"/>
        <dbReference type="ChEBI" id="CHEBI:15377"/>
        <dbReference type="ChEBI" id="CHEBI:35146"/>
        <dbReference type="ChEBI" id="CHEBI:49258"/>
        <dbReference type="EC" id="4.2.1.9"/>
    </reaction>
    <physiologicalReaction direction="left-to-right" evidence="1">
        <dbReference type="Rhea" id="RHEA:27695"/>
    </physiologicalReaction>
</comment>
<comment type="cofactor">
    <cofactor evidence="1">
        <name>[2Fe-2S] cluster</name>
        <dbReference type="ChEBI" id="CHEBI:190135"/>
    </cofactor>
    <text evidence="1">Binds 1 [2Fe-2S] cluster per subunit. This cluster acts as a Lewis acid cofactor.</text>
</comment>
<comment type="cofactor">
    <cofactor evidence="1">
        <name>Mg(2+)</name>
        <dbReference type="ChEBI" id="CHEBI:18420"/>
    </cofactor>
</comment>
<comment type="pathway">
    <text evidence="1">Amino-acid biosynthesis; L-isoleucine biosynthesis; L-isoleucine from 2-oxobutanoate: step 3/4.</text>
</comment>
<comment type="pathway">
    <text evidence="1">Amino-acid biosynthesis; L-valine biosynthesis; L-valine from pyruvate: step 3/4.</text>
</comment>
<comment type="subunit">
    <text evidence="1">Homodimer.</text>
</comment>
<comment type="similarity">
    <text evidence="1">Belongs to the IlvD/Edd family.</text>
</comment>